<keyword id="KW-0025">Alternative splicing</keyword>
<keyword id="KW-0067">ATP-binding</keyword>
<keyword id="KW-0106">Calcium</keyword>
<keyword id="KW-0112">Calmodulin-binding</keyword>
<keyword id="KW-0418">Kinase</keyword>
<keyword id="KW-0547">Nucleotide-binding</keyword>
<keyword id="KW-0597">Phosphoprotein</keyword>
<keyword id="KW-1185">Reference proteome</keyword>
<keyword id="KW-0723">Serine/threonine-protein kinase</keyword>
<keyword id="KW-0808">Transferase</keyword>
<name>EF2K_CAEEL</name>
<accession>O01991</accession>
<accession>O01992</accession>
<accession>Q20309</accession>
<accession>Q8MYP9</accession>
<evidence type="ECO:0000250" key="1"/>
<evidence type="ECO:0000255" key="2"/>
<evidence type="ECO:0000255" key="3">
    <source>
        <dbReference type="PROSITE-ProRule" id="PRU00501"/>
    </source>
</evidence>
<evidence type="ECO:0000256" key="4">
    <source>
        <dbReference type="SAM" id="MobiDB-lite"/>
    </source>
</evidence>
<evidence type="ECO:0000269" key="5">
    <source>
    </source>
</evidence>
<evidence type="ECO:0000269" key="6">
    <source>
    </source>
</evidence>
<evidence type="ECO:0000303" key="7">
    <source>
    </source>
</evidence>
<evidence type="ECO:0000305" key="8"/>
<protein>
    <recommendedName>
        <fullName evidence="7">Eukaryotic elongation factor 2 kinase</fullName>
        <shortName evidence="7">eEF-2 kinase</shortName>
        <shortName>eEF-2K</shortName>
        <ecNumber evidence="6">2.7.11.20</ecNumber>
    </recommendedName>
    <alternativeName>
        <fullName>Calcium/calmodulin-dependent eukaryotic elongation factor 2 kinase</fullName>
    </alternativeName>
</protein>
<reference key="1">
    <citation type="journal article" date="1997" name="Proc. Natl. Acad. Sci. U.S.A.">
        <title>Identification of a new class of protein kinases represented by eukaryotic elongation factor-2 kinase.</title>
        <authorList>
            <person name="Ryazanov A.G."/>
            <person name="Ward M.D."/>
            <person name="Mendola C.E."/>
            <person name="Pavur K.S."/>
            <person name="Dorovkov M.V."/>
            <person name="Wiedmann M."/>
            <person name="Erdjument-Bromage H."/>
            <person name="Tempst P."/>
            <person name="Parmer T.G."/>
            <person name="Prostko C.R."/>
            <person name="Germino F.J."/>
            <person name="Hait W.N."/>
        </authorList>
    </citation>
    <scope>NUCLEOTIDE SEQUENCE [MRNA] (ISOFORMS A AND B)</scope>
    <scope>FUNCTION</scope>
    <scope>CATALYTIC ACTIVITY</scope>
    <scope>ACTIVITY REGULATION</scope>
    <source>
        <strain>Bristol N2</strain>
    </source>
</reference>
<reference key="2">
    <citation type="journal article" date="1998" name="Science">
        <title>Genome sequence of the nematode C. elegans: a platform for investigating biology.</title>
        <authorList>
            <consortium name="The C. elegans sequencing consortium"/>
        </authorList>
    </citation>
    <scope>NUCLEOTIDE SEQUENCE [LARGE SCALE GENOMIC DNA]</scope>
    <scope>ALTERNATIVE SPLICING</scope>
    <source>
        <strain>Bristol N2</strain>
    </source>
</reference>
<reference key="3">
    <citation type="journal article" date="2008" name="Cell Calcium">
        <title>Ca(2+)/Calmodulin-binding proteins from the C. elegans proteome.</title>
        <authorList>
            <person name="Shen X."/>
            <person name="Valencia C.A."/>
            <person name="Gao W."/>
            <person name="Cotten S.W."/>
            <person name="Dong B."/>
            <person name="Huang B.C."/>
            <person name="Liu R."/>
        </authorList>
    </citation>
    <scope>INTERACTION WITH CMD-1</scope>
</reference>
<organism>
    <name type="scientific">Caenorhabditis elegans</name>
    <dbReference type="NCBI Taxonomy" id="6239"/>
    <lineage>
        <taxon>Eukaryota</taxon>
        <taxon>Metazoa</taxon>
        <taxon>Ecdysozoa</taxon>
        <taxon>Nematoda</taxon>
        <taxon>Chromadorea</taxon>
        <taxon>Rhabditida</taxon>
        <taxon>Rhabditina</taxon>
        <taxon>Rhabditomorpha</taxon>
        <taxon>Rhabditoidea</taxon>
        <taxon>Rhabditidae</taxon>
        <taxon>Peloderinae</taxon>
        <taxon>Caenorhabditis</taxon>
    </lineage>
</organism>
<comment type="function">
    <text evidence="6 7">Phosphorylates elongation factor-2 (eEF-2) at two threonine residues that are conserved in all eukaryotes and are located within a GTP-binding domain (PubMed:9144159). Calcium(2+)/calmodulin dependent activity (PubMed:9144159). Inactivates eEF-2 by catalyzing its phosphorylation (PubMed:9144159). eEF-2 catalyzes the movement of the ribosome along mRNA during translation in eukaryotic cells (PubMed:9144159).</text>
</comment>
<comment type="catalytic activity">
    <reaction evidence="6">
        <text>[translation elongation factor 2] + ATP = [translation elongation factor 2]-phosphate + ADP + H(+)</text>
        <dbReference type="Rhea" id="RHEA:21436"/>
        <dbReference type="Rhea" id="RHEA-COMP:11268"/>
        <dbReference type="Rhea" id="RHEA-COMP:11269"/>
        <dbReference type="ChEBI" id="CHEBI:15378"/>
        <dbReference type="ChEBI" id="CHEBI:30616"/>
        <dbReference type="ChEBI" id="CHEBI:43176"/>
        <dbReference type="ChEBI" id="CHEBI:68546"/>
        <dbReference type="ChEBI" id="CHEBI:456216"/>
        <dbReference type="EC" id="2.7.11.20"/>
    </reaction>
    <physiologicalReaction direction="left-to-right" evidence="6">
        <dbReference type="Rhea" id="RHEA:21437"/>
    </physiologicalReaction>
</comment>
<comment type="activity regulation">
    <text evidence="1 6">Calcium(2+)/calmodulin dependent activity (PubMed:9144159). Undergoes calcium/calmodulin-dependent intramolecular autophosphorylation, and this results in it becoming partially calcium/calmodulin-independent.</text>
</comment>
<comment type="subunit">
    <text evidence="5 8">Monomer or homodimer (Probable). Interacts with cmd-1 in the presence of Ca(2+) (PubMed:17854888).</text>
</comment>
<comment type="alternative products">
    <event type="alternative splicing"/>
    <isoform>
        <id>O01991-1</id>
        <name>a</name>
        <sequence type="displayed"/>
    </isoform>
    <isoform>
        <id>O01991-2</id>
        <name>b</name>
        <sequence type="described" ref="VSP_004231"/>
    </isoform>
</comment>
<comment type="similarity">
    <text evidence="8">Belongs to the protein kinase superfamily. Alpha-type protein kinase family.</text>
</comment>
<proteinExistence type="evidence at protein level"/>
<gene>
    <name type="primary">efk-1</name>
    <name type="ORF">F42A10.4</name>
</gene>
<dbReference type="EC" id="2.7.11.20" evidence="6"/>
<dbReference type="EMBL" id="U93846">
    <property type="protein sequence ID" value="AAB58268.1"/>
    <property type="molecule type" value="mRNA"/>
</dbReference>
<dbReference type="EMBL" id="U93847">
    <property type="protein sequence ID" value="AAB58269.1"/>
    <property type="molecule type" value="mRNA"/>
</dbReference>
<dbReference type="EMBL" id="FO080631">
    <property type="protein sequence ID" value="CCD65313.1"/>
    <property type="molecule type" value="Genomic_DNA"/>
</dbReference>
<dbReference type="EMBL" id="FO080631">
    <property type="protein sequence ID" value="CCD65314.1"/>
    <property type="molecule type" value="Genomic_DNA"/>
</dbReference>
<dbReference type="RefSeq" id="NP_001022572.1">
    <molecule id="O01991-1"/>
    <property type="nucleotide sequence ID" value="NM_001027401.4"/>
</dbReference>
<dbReference type="RefSeq" id="NP_001022573.1">
    <molecule id="O01991-2"/>
    <property type="nucleotide sequence ID" value="NM_001027402.6"/>
</dbReference>
<dbReference type="SMR" id="O01991"/>
<dbReference type="BioGRID" id="41092">
    <property type="interactions" value="5"/>
</dbReference>
<dbReference type="FunCoup" id="O01991">
    <property type="interactions" value="891"/>
</dbReference>
<dbReference type="IntAct" id="O01991">
    <property type="interactions" value="2"/>
</dbReference>
<dbReference type="STRING" id="6239.F42A10.4a.1"/>
<dbReference type="iPTMnet" id="O01991"/>
<dbReference type="PaxDb" id="6239-F42A10.4a"/>
<dbReference type="PeptideAtlas" id="O01991"/>
<dbReference type="EnsemblMetazoa" id="F42A10.4a.1">
    <molecule id="O01991-1"/>
    <property type="protein sequence ID" value="F42A10.4a.1"/>
    <property type="gene ID" value="WBGene00001160"/>
</dbReference>
<dbReference type="EnsemblMetazoa" id="F42A10.4b.1">
    <molecule id="O01991-2"/>
    <property type="protein sequence ID" value="F42A10.4b.1"/>
    <property type="gene ID" value="WBGene00001160"/>
</dbReference>
<dbReference type="GeneID" id="175871"/>
<dbReference type="KEGG" id="cel:CELE_F42A10.4"/>
<dbReference type="UCSC" id="F42A10.4a.1">
    <molecule id="O01991-1"/>
    <property type="organism name" value="c. elegans"/>
</dbReference>
<dbReference type="AGR" id="WB:WBGene00001160"/>
<dbReference type="CTD" id="175871"/>
<dbReference type="WormBase" id="F42A10.4a">
    <molecule id="O01991-1"/>
    <property type="protein sequence ID" value="CE32415"/>
    <property type="gene ID" value="WBGene00001160"/>
    <property type="gene designation" value="efk-1"/>
</dbReference>
<dbReference type="WormBase" id="F42A10.4b">
    <molecule id="O01991-2"/>
    <property type="protein sequence ID" value="CE32416"/>
    <property type="gene ID" value="WBGene00001160"/>
    <property type="gene designation" value="efk-1"/>
</dbReference>
<dbReference type="eggNOG" id="ENOG502QVA3">
    <property type="taxonomic scope" value="Eukaryota"/>
</dbReference>
<dbReference type="GeneTree" id="ENSGT00940000157839"/>
<dbReference type="InParanoid" id="O01991"/>
<dbReference type="OMA" id="CLQMEAK"/>
<dbReference type="OrthoDB" id="301415at2759"/>
<dbReference type="PhylomeDB" id="O01991"/>
<dbReference type="BRENDA" id="2.7.11.20">
    <property type="organism ID" value="1045"/>
</dbReference>
<dbReference type="Reactome" id="R-CEL-166208">
    <property type="pathway name" value="mTORC1-mediated signalling"/>
</dbReference>
<dbReference type="PRO" id="PR:O01991"/>
<dbReference type="Proteomes" id="UP000001940">
    <property type="component" value="Chromosome III"/>
</dbReference>
<dbReference type="Bgee" id="WBGene00001160">
    <property type="expression patterns" value="Expressed in embryo and 4 other cell types or tissues"/>
</dbReference>
<dbReference type="GO" id="GO:0005524">
    <property type="term" value="F:ATP binding"/>
    <property type="evidence" value="ECO:0007669"/>
    <property type="project" value="UniProtKB-KW"/>
</dbReference>
<dbReference type="GO" id="GO:0005509">
    <property type="term" value="F:calcium ion binding"/>
    <property type="evidence" value="ECO:0007669"/>
    <property type="project" value="InterPro"/>
</dbReference>
<dbReference type="GO" id="GO:0005516">
    <property type="term" value="F:calmodulin binding"/>
    <property type="evidence" value="ECO:0007669"/>
    <property type="project" value="UniProtKB-KW"/>
</dbReference>
<dbReference type="GO" id="GO:0004686">
    <property type="term" value="F:elongation factor-2 kinase activity"/>
    <property type="evidence" value="ECO:0000314"/>
    <property type="project" value="WormBase"/>
</dbReference>
<dbReference type="GO" id="GO:0031037">
    <property type="term" value="P:myosin II filament disassembly"/>
    <property type="evidence" value="ECO:0000318"/>
    <property type="project" value="GO_Central"/>
</dbReference>
<dbReference type="CDD" id="cd16967">
    <property type="entry name" value="Alpha_kinase_eEF2K"/>
    <property type="match status" value="1"/>
</dbReference>
<dbReference type="FunFam" id="3.20.200.10:FF:000002">
    <property type="entry name" value="Eukaryotic elongation factor 2 kinase"/>
    <property type="match status" value="1"/>
</dbReference>
<dbReference type="FunFam" id="3.30.200.20:FF:000336">
    <property type="entry name" value="Eukaryotic elongation factor 2 kinase"/>
    <property type="match status" value="1"/>
</dbReference>
<dbReference type="Gene3D" id="3.20.200.10">
    <property type="entry name" value="MHCK/EF2 kinase"/>
    <property type="match status" value="1"/>
</dbReference>
<dbReference type="Gene3D" id="3.30.200.20">
    <property type="entry name" value="Phosphorylase Kinase, domain 1"/>
    <property type="match status" value="2"/>
</dbReference>
<dbReference type="Gene3D" id="1.25.40.10">
    <property type="entry name" value="Tetratricopeptide repeat domain"/>
    <property type="match status" value="1"/>
</dbReference>
<dbReference type="InterPro" id="IPR004166">
    <property type="entry name" value="a-kinase_dom"/>
</dbReference>
<dbReference type="InterPro" id="IPR051852">
    <property type="entry name" value="Alpha-type_PK"/>
</dbReference>
<dbReference type="InterPro" id="IPR017400">
    <property type="entry name" value="eEF-2K"/>
</dbReference>
<dbReference type="InterPro" id="IPR047588">
    <property type="entry name" value="eEF2K_a_kinase_dom"/>
</dbReference>
<dbReference type="InterPro" id="IPR011009">
    <property type="entry name" value="Kinase-like_dom_sf"/>
</dbReference>
<dbReference type="InterPro" id="IPR011990">
    <property type="entry name" value="TPR-like_helical_dom_sf"/>
</dbReference>
<dbReference type="PANTHER" id="PTHR45992:SF2">
    <property type="entry name" value="EUKARYOTIC ELONGATION FACTOR 2 KINASE"/>
    <property type="match status" value="1"/>
</dbReference>
<dbReference type="PANTHER" id="PTHR45992">
    <property type="entry name" value="EUKARYOTIC ELONGATION FACTOR 2 KINASE-RELATED"/>
    <property type="match status" value="1"/>
</dbReference>
<dbReference type="Pfam" id="PF02816">
    <property type="entry name" value="Alpha_kinase"/>
    <property type="match status" value="1"/>
</dbReference>
<dbReference type="PIRSF" id="PIRSF038139">
    <property type="entry name" value="Elongation_factor_2_kinase"/>
    <property type="match status" value="1"/>
</dbReference>
<dbReference type="SMART" id="SM00811">
    <property type="entry name" value="Alpha_kinase"/>
    <property type="match status" value="1"/>
</dbReference>
<dbReference type="SUPFAM" id="SSF81901">
    <property type="entry name" value="HCP-like"/>
    <property type="match status" value="1"/>
</dbReference>
<dbReference type="SUPFAM" id="SSF56112">
    <property type="entry name" value="Protein kinase-like (PK-like)"/>
    <property type="match status" value="1"/>
</dbReference>
<dbReference type="PROSITE" id="PS51158">
    <property type="entry name" value="ALPHA_KINASE"/>
    <property type="match status" value="1"/>
</dbReference>
<feature type="chain" id="PRO_0000086935" description="Eukaryotic elongation factor 2 kinase">
    <location>
        <begin position="1"/>
        <end position="768"/>
    </location>
</feature>
<feature type="domain" description="Alpha-type protein kinase" evidence="3">
    <location>
        <begin position="102"/>
        <end position="309"/>
    </location>
</feature>
<feature type="region of interest" description="Disordered" evidence="4">
    <location>
        <begin position="1"/>
        <end position="21"/>
    </location>
</feature>
<feature type="region of interest" description="Disordered" evidence="4">
    <location>
        <begin position="402"/>
        <end position="446"/>
    </location>
</feature>
<feature type="compositionally biased region" description="Polar residues" evidence="4">
    <location>
        <begin position="1"/>
        <end position="17"/>
    </location>
</feature>
<feature type="compositionally biased region" description="Acidic residues" evidence="4">
    <location>
        <begin position="402"/>
        <end position="411"/>
    </location>
</feature>
<feature type="binding site" evidence="2">
    <location>
        <begin position="279"/>
        <end position="284"/>
    </location>
    <ligand>
        <name>ATP</name>
        <dbReference type="ChEBI" id="CHEBI:30616"/>
    </ligand>
</feature>
<feature type="splice variant" id="VSP_004231" description="In isoform b." evidence="7">
    <location>
        <begin position="625"/>
        <end position="632"/>
    </location>
</feature>
<sequence length="768" mass="87825">MTIDTTNESDNSPTNSPGLEASARTFSLNASKMVRITDDYADEVFIEQNDVVIEKPRMDPLHVRKLMETWRKAARRARTNYIDPWDEFNIHEYPVQRAKRYRYSAIRKQWTEDIVDVRLHPDSFARGAMRECYRLKKCSKHGTSQDWSSNYVAKRYICQVDRRVLFDDVRLQMDAKLWAEEYNRYNPPKKIDIVQMCVIEMIDVKGSPLYHLEHFIEGKYIKYNSNSGFVSNAARLTPQAFSHFTFERSGHQMMVVDIQGVGDLYTDPQIHTVVGTDYGDGNLGTRGMALFFHSHRCNDICETMDLSNFELSPPEIEATEVAMEVAAKQKKSCIVPPTVFEARRNRISSECVHVEHGISMDQLRKRKTLNQSSTDLSAKSHNEDCVCPECIPVVEQLCEPCSEDEEDEEEDYPRSEKSGNSQKSRRSRMSISTRSSGDESASRPRKCGFVDLNSLRQRHDSFRSSVGTYSMNSSRQTRDTEKDEFWKVLRKQSVPANILSLQLQQMAANLENDEDVPQVTGHQFSVLGQIHIDLSRYHELGRFVEVDSEHKEMLEGSENDARVPIKYDKQSAIFHLDIARKCGILEAVLTSAHIVLGLPHELLKEVTVDDLFPNGFGEQENGIRADKGQKPCDLEEFGSDLMEIAAEMGDKGAMLYMAHAYETGQHLGPNRRTDYKKSIDWYQRVVGFQEEEELDSDCGKTTFSSFAPLTRHEILAKMAEMYKEGGYGLNQDFERAYGLFNEAAEAAMEAMNGKLANKYYEKAEMCGE</sequence>